<gene>
    <name type="primary">Grk6</name>
    <name type="synonym">Gprk6</name>
</gene>
<dbReference type="EC" id="2.7.11.16"/>
<dbReference type="EMBL" id="Y09365">
    <property type="protein sequence ID" value="CAA70542.1"/>
    <property type="molecule type" value="mRNA"/>
</dbReference>
<dbReference type="SMR" id="P97711"/>
<dbReference type="FunCoup" id="P97711">
    <property type="interactions" value="2502"/>
</dbReference>
<dbReference type="STRING" id="10116.ENSRNOP00000073781"/>
<dbReference type="iPTMnet" id="P97711"/>
<dbReference type="PhosphoSitePlus" id="P97711"/>
<dbReference type="PaxDb" id="10116-ENSRNOP00000050134"/>
<dbReference type="ABCD" id="P97711">
    <property type="antibodies" value="1 sequenced antibody"/>
</dbReference>
<dbReference type="UCSC" id="RGD:61986">
    <property type="organism name" value="rat"/>
</dbReference>
<dbReference type="AGR" id="RGD:61986"/>
<dbReference type="RGD" id="61986">
    <property type="gene designation" value="Grk6"/>
</dbReference>
<dbReference type="eggNOG" id="KOG0986">
    <property type="taxonomic scope" value="Eukaryota"/>
</dbReference>
<dbReference type="InParanoid" id="P97711"/>
<dbReference type="PhylomeDB" id="P97711"/>
<dbReference type="BRENDA" id="2.7.11.16">
    <property type="organism ID" value="5301"/>
</dbReference>
<dbReference type="Reactome" id="R-RNO-418555">
    <property type="pathway name" value="G alpha (s) signalling events"/>
</dbReference>
<dbReference type="PRO" id="PR:P97711"/>
<dbReference type="Proteomes" id="UP000002494">
    <property type="component" value="Unplaced"/>
</dbReference>
<dbReference type="GO" id="GO:0005737">
    <property type="term" value="C:cytoplasm"/>
    <property type="evidence" value="ECO:0000318"/>
    <property type="project" value="GO_Central"/>
</dbReference>
<dbReference type="GO" id="GO:0016020">
    <property type="term" value="C:membrane"/>
    <property type="evidence" value="ECO:0007669"/>
    <property type="project" value="UniProtKB-SubCell"/>
</dbReference>
<dbReference type="GO" id="GO:0005524">
    <property type="term" value="F:ATP binding"/>
    <property type="evidence" value="ECO:0007669"/>
    <property type="project" value="UniProtKB-KW"/>
</dbReference>
<dbReference type="GO" id="GO:0047696">
    <property type="term" value="F:beta-adrenergic receptor kinase activity"/>
    <property type="evidence" value="ECO:0000266"/>
    <property type="project" value="RGD"/>
</dbReference>
<dbReference type="GO" id="GO:0004703">
    <property type="term" value="F:G protein-coupled receptor kinase activity"/>
    <property type="evidence" value="ECO:0000314"/>
    <property type="project" value="RGD"/>
</dbReference>
<dbReference type="GO" id="GO:0071222">
    <property type="term" value="P:cellular response to lipopolysaccharide"/>
    <property type="evidence" value="ECO:0000270"/>
    <property type="project" value="RGD"/>
</dbReference>
<dbReference type="GO" id="GO:0002029">
    <property type="term" value="P:desensitization of G protein-coupled receptor signaling pathway"/>
    <property type="evidence" value="ECO:0000314"/>
    <property type="project" value="RGD"/>
</dbReference>
<dbReference type="GO" id="GO:0009966">
    <property type="term" value="P:regulation of signal transduction"/>
    <property type="evidence" value="ECO:0000318"/>
    <property type="project" value="GO_Central"/>
</dbReference>
<dbReference type="GO" id="GO:0016055">
    <property type="term" value="P:Wnt signaling pathway"/>
    <property type="evidence" value="ECO:0007669"/>
    <property type="project" value="UniProtKB-KW"/>
</dbReference>
<dbReference type="CDD" id="cd05630">
    <property type="entry name" value="STKc_GRK6"/>
    <property type="match status" value="1"/>
</dbReference>
<dbReference type="FunFam" id="1.10.167.10:FF:000009">
    <property type="entry name" value="G protein-coupled receptor kinase"/>
    <property type="match status" value="1"/>
</dbReference>
<dbReference type="FunFam" id="1.10.510.10:FF:000074">
    <property type="entry name" value="G protein-coupled receptor kinase"/>
    <property type="match status" value="1"/>
</dbReference>
<dbReference type="Gene3D" id="6.10.250.2260">
    <property type="match status" value="1"/>
</dbReference>
<dbReference type="Gene3D" id="3.30.200.20">
    <property type="entry name" value="Phosphorylase Kinase, domain 1"/>
    <property type="match status" value="1"/>
</dbReference>
<dbReference type="Gene3D" id="1.10.167.10">
    <property type="entry name" value="Regulator of G-protein Signalling 4, domain 2"/>
    <property type="match status" value="1"/>
</dbReference>
<dbReference type="Gene3D" id="1.10.510.10">
    <property type="entry name" value="Transferase(Phosphotransferase) domain 1"/>
    <property type="match status" value="1"/>
</dbReference>
<dbReference type="InterPro" id="IPR000961">
    <property type="entry name" value="AGC-kinase_C"/>
</dbReference>
<dbReference type="InterPro" id="IPR000239">
    <property type="entry name" value="GPCR_kinase"/>
</dbReference>
<dbReference type="InterPro" id="IPR011009">
    <property type="entry name" value="Kinase-like_dom_sf"/>
</dbReference>
<dbReference type="InterPro" id="IPR000719">
    <property type="entry name" value="Prot_kinase_dom"/>
</dbReference>
<dbReference type="InterPro" id="IPR017441">
    <property type="entry name" value="Protein_kinase_ATP_BS"/>
</dbReference>
<dbReference type="InterPro" id="IPR016137">
    <property type="entry name" value="RGS"/>
</dbReference>
<dbReference type="InterPro" id="IPR036305">
    <property type="entry name" value="RGS_sf"/>
</dbReference>
<dbReference type="InterPro" id="IPR044926">
    <property type="entry name" value="RGS_subdomain_2"/>
</dbReference>
<dbReference type="InterPro" id="IPR008271">
    <property type="entry name" value="Ser/Thr_kinase_AS"/>
</dbReference>
<dbReference type="PANTHER" id="PTHR24355:SF15">
    <property type="entry name" value="G PROTEIN-COUPLED RECEPTOR KINASE 6"/>
    <property type="match status" value="1"/>
</dbReference>
<dbReference type="PANTHER" id="PTHR24355">
    <property type="entry name" value="G PROTEIN-COUPLED RECEPTOR KINASE/RIBOSOMAL PROTEIN S6 KINASE"/>
    <property type="match status" value="1"/>
</dbReference>
<dbReference type="Pfam" id="PF00069">
    <property type="entry name" value="Pkinase"/>
    <property type="match status" value="1"/>
</dbReference>
<dbReference type="Pfam" id="PF00615">
    <property type="entry name" value="RGS"/>
    <property type="match status" value="1"/>
</dbReference>
<dbReference type="PRINTS" id="PR00717">
    <property type="entry name" value="GPCRKINASE"/>
</dbReference>
<dbReference type="SMART" id="SM00315">
    <property type="entry name" value="RGS"/>
    <property type="match status" value="1"/>
</dbReference>
<dbReference type="SMART" id="SM00133">
    <property type="entry name" value="S_TK_X"/>
    <property type="match status" value="1"/>
</dbReference>
<dbReference type="SMART" id="SM00220">
    <property type="entry name" value="S_TKc"/>
    <property type="match status" value="1"/>
</dbReference>
<dbReference type="SUPFAM" id="SSF56112">
    <property type="entry name" value="Protein kinase-like (PK-like)"/>
    <property type="match status" value="1"/>
</dbReference>
<dbReference type="SUPFAM" id="SSF48097">
    <property type="entry name" value="Regulator of G-protein signaling, RGS"/>
    <property type="match status" value="1"/>
</dbReference>
<dbReference type="PROSITE" id="PS51285">
    <property type="entry name" value="AGC_KINASE_CTER"/>
    <property type="match status" value="1"/>
</dbReference>
<dbReference type="PROSITE" id="PS00107">
    <property type="entry name" value="PROTEIN_KINASE_ATP"/>
    <property type="match status" value="1"/>
</dbReference>
<dbReference type="PROSITE" id="PS50011">
    <property type="entry name" value="PROTEIN_KINASE_DOM"/>
    <property type="match status" value="1"/>
</dbReference>
<dbReference type="PROSITE" id="PS00108">
    <property type="entry name" value="PROTEIN_KINASE_ST"/>
    <property type="match status" value="1"/>
</dbReference>
<dbReference type="PROSITE" id="PS50132">
    <property type="entry name" value="RGS"/>
    <property type="match status" value="1"/>
</dbReference>
<protein>
    <recommendedName>
        <fullName>G protein-coupled receptor kinase 6</fullName>
        <ecNumber>2.7.11.16</ecNumber>
    </recommendedName>
    <alternativeName>
        <fullName>G protein-coupled receptor kinase GRK6</fullName>
    </alternativeName>
</protein>
<reference key="1">
    <citation type="journal article" date="1997" name="Brain Res. Mol. Brain Res.">
        <title>Molecular cloning of rat G-protein-coupled receptor kinase 6 (GRK6) from brain tissue, and its mRNA expression in different brain regions and peripheral tissues.</title>
        <authorList>
            <person name="Fehr C."/>
            <person name="Fickova M."/>
            <person name="Hiemke C."/>
            <person name="Reuss S."/>
            <person name="Dahmen N."/>
        </authorList>
    </citation>
    <scope>NUCLEOTIDE SEQUENCE [MRNA]</scope>
    <scope>TISSUE SPECIFICITY</scope>
    <source>
        <tissue>Brain</tissue>
    </source>
</reference>
<reference key="2">
    <citation type="journal article" date="1998" name="Proc. Natl. Acad. Sci. U.S.A.">
        <title>Beta2-adrenergic receptor regulation by GIT1, a G protein-coupled receptor kinase-associated ADP ribosylation factor GTPase-activating protein.</title>
        <authorList>
            <person name="Premont R.T."/>
            <person name="Claing A."/>
            <person name="Vitale N."/>
            <person name="Freeman J.L.R."/>
            <person name="Pitcher J.A."/>
            <person name="Patton W.A."/>
            <person name="Moss J."/>
            <person name="Vaughan M."/>
            <person name="Lefkowitz R.J."/>
        </authorList>
    </citation>
    <scope>INTERACTION WITH GIT1</scope>
</reference>
<evidence type="ECO:0000250" key="1"/>
<evidence type="ECO:0000250" key="2">
    <source>
        <dbReference type="UniProtKB" id="O70293"/>
    </source>
</evidence>
<evidence type="ECO:0000250" key="3">
    <source>
        <dbReference type="UniProtKB" id="P43250"/>
    </source>
</evidence>
<evidence type="ECO:0000255" key="4">
    <source>
        <dbReference type="PROSITE-ProRule" id="PRU00159"/>
    </source>
</evidence>
<evidence type="ECO:0000255" key="5">
    <source>
        <dbReference type="PROSITE-ProRule" id="PRU00171"/>
    </source>
</evidence>
<evidence type="ECO:0000255" key="6">
    <source>
        <dbReference type="PROSITE-ProRule" id="PRU00618"/>
    </source>
</evidence>
<evidence type="ECO:0000255" key="7">
    <source>
        <dbReference type="PROSITE-ProRule" id="PRU10027"/>
    </source>
</evidence>
<evidence type="ECO:0000269" key="8">
    <source>
    </source>
</evidence>
<evidence type="ECO:0000269" key="9">
    <source>
    </source>
</evidence>
<evidence type="ECO:0000305" key="10"/>
<comment type="function">
    <text evidence="1">Specifically phosphorylates the activated forms of G protein-coupled receptors. Such receptor phosphorylation initiates beta-arrestin-mediated receptor desensitization, internalization, and signaling events leading to their desensitization. Seems to be involved in the desensitization of D2-like dopamine receptors in striatum and chemokine receptor CXCR4 which is critical for CXCL12-induced cell chemotaxis (By similarity). Phosphorylates rhodopsin (RHO) (in vitro) and a non G-protein-coupled receptor: LRP6 during Wnt signaling (in vitro) (By similarity).</text>
</comment>
<comment type="catalytic activity">
    <reaction>
        <text>[G-protein-coupled receptor] + ATP = [G-protein-coupled receptor]-phosphate + ADP + H(+)</text>
        <dbReference type="Rhea" id="RHEA:12008"/>
        <dbReference type="Rhea" id="RHEA-COMP:11260"/>
        <dbReference type="Rhea" id="RHEA-COMP:11261"/>
        <dbReference type="ChEBI" id="CHEBI:15378"/>
        <dbReference type="ChEBI" id="CHEBI:30616"/>
        <dbReference type="ChEBI" id="CHEBI:43176"/>
        <dbReference type="ChEBI" id="CHEBI:68546"/>
        <dbReference type="ChEBI" id="CHEBI:456216"/>
        <dbReference type="EC" id="2.7.11.16"/>
    </reaction>
</comment>
<comment type="subunit">
    <text evidence="9">Interacts with GIT1.</text>
</comment>
<comment type="subcellular location">
    <subcellularLocation>
        <location>Membrane</location>
        <topology>Lipid-anchor</topology>
    </subcellularLocation>
</comment>
<comment type="tissue specificity">
    <text evidence="8">Widely expressed. Detectable in all brain areas examined.</text>
</comment>
<comment type="similarity">
    <text evidence="10">Belongs to the protein kinase superfamily. AGC Ser/Thr protein kinase family. GPRK subfamily.</text>
</comment>
<accession>P97711</accession>
<name>GRK6_RAT</name>
<organism>
    <name type="scientific">Rattus norvegicus</name>
    <name type="common">Rat</name>
    <dbReference type="NCBI Taxonomy" id="10116"/>
    <lineage>
        <taxon>Eukaryota</taxon>
        <taxon>Metazoa</taxon>
        <taxon>Chordata</taxon>
        <taxon>Craniata</taxon>
        <taxon>Vertebrata</taxon>
        <taxon>Euteleostomi</taxon>
        <taxon>Mammalia</taxon>
        <taxon>Eutheria</taxon>
        <taxon>Euarchontoglires</taxon>
        <taxon>Glires</taxon>
        <taxon>Rodentia</taxon>
        <taxon>Myomorpha</taxon>
        <taxon>Muroidea</taxon>
        <taxon>Muridae</taxon>
        <taxon>Murinae</taxon>
        <taxon>Rattus</taxon>
    </lineage>
</organism>
<sequence>MELENIVANTVLLKAREGGGGNRKGKSKKWRQMLQFPHISQCEELRLSLERDYHSLCERQPIGRLLFREFCATRPELTRCTAFLDGVAEYEVTPDEKRKACGCRLMQNFLSHTGPDLIPEVPRQLVSNCAQRLEQGPCKDLFQELTRLTHEYLSMAPFADYLDSIYFNRFLQWKWLERQPVTKNTFRQYRVLGKGGFGEVCACQVRATGKMYACKKLEKKRIKKRKGEAMALNEKQILEKVNSRFVVSLAYAYETKDALCLVLTLMNGGDLKFHIYHMGQAGFPEARAVFYAAEICCGLEDLHRERIVYRDLKPENILLDDHGHIRISDLGLTVHVPEGQTIKGRVGTVGYMAPEVVKNERYTFSPDWWALGCLLYEMIAGQSPFQQRKKKIKREEVERLVKEVAEEYTDRFSPQARSLCSQLPNKDPAERLGCRGGGAREVKEHPLFKKLNFKRLGAGMLEPPFKPDPQAIYCKDVLDIEQFSTVKGVDLEPTDQDFYQKFATGSVSIPWQNEMVETECFQELNVFGLDGSVPPDLDWKGQPTAPPKKGLLQRLFSRQDCCGNCSDSEEELPTRL</sequence>
<proteinExistence type="evidence at protein level"/>
<keyword id="KW-0067">ATP-binding</keyword>
<keyword id="KW-0418">Kinase</keyword>
<keyword id="KW-0449">Lipoprotein</keyword>
<keyword id="KW-0472">Membrane</keyword>
<keyword id="KW-0547">Nucleotide-binding</keyword>
<keyword id="KW-0564">Palmitate</keyword>
<keyword id="KW-0597">Phosphoprotein</keyword>
<keyword id="KW-1185">Reference proteome</keyword>
<keyword id="KW-0723">Serine/threonine-protein kinase</keyword>
<keyword id="KW-0808">Transferase</keyword>
<keyword id="KW-0879">Wnt signaling pathway</keyword>
<feature type="chain" id="PRO_0000085976" description="G protein-coupled receptor kinase 6">
    <location>
        <begin position="1"/>
        <end position="576"/>
    </location>
</feature>
<feature type="domain" description="RGS" evidence="5">
    <location>
        <begin position="53"/>
        <end position="171"/>
    </location>
</feature>
<feature type="domain" description="Protein kinase" evidence="4">
    <location>
        <begin position="186"/>
        <end position="448"/>
    </location>
</feature>
<feature type="domain" description="AGC-kinase C-terminal" evidence="6">
    <location>
        <begin position="449"/>
        <end position="514"/>
    </location>
</feature>
<feature type="region of interest" description="N-terminal">
    <location>
        <begin position="1"/>
        <end position="185"/>
    </location>
</feature>
<feature type="active site" description="Proton acceptor" evidence="4 7">
    <location>
        <position position="311"/>
    </location>
</feature>
<feature type="binding site" evidence="4">
    <location>
        <begin position="192"/>
        <end position="200"/>
    </location>
    <ligand>
        <name>ATP</name>
        <dbReference type="ChEBI" id="CHEBI:30616"/>
    </ligand>
</feature>
<feature type="binding site" evidence="4">
    <location>
        <position position="215"/>
    </location>
    <ligand>
        <name>ATP</name>
        <dbReference type="ChEBI" id="CHEBI:30616"/>
    </ligand>
</feature>
<feature type="binding site" evidence="4">
    <location>
        <begin position="264"/>
        <end position="270"/>
    </location>
    <ligand>
        <name>ATP</name>
        <dbReference type="ChEBI" id="CHEBI:30616"/>
    </ligand>
</feature>
<feature type="binding site" evidence="4">
    <location>
        <begin position="315"/>
        <end position="318"/>
    </location>
    <ligand>
        <name>ATP</name>
        <dbReference type="ChEBI" id="CHEBI:30616"/>
    </ligand>
</feature>
<feature type="modified residue" description="Phosphoserine; by autocatalysis" evidence="3">
    <location>
        <position position="484"/>
    </location>
</feature>
<feature type="modified residue" description="Phosphothreonine; by autocatalysis" evidence="3">
    <location>
        <position position="485"/>
    </location>
</feature>
<feature type="modified residue" description="Phosphoserine" evidence="2">
    <location>
        <position position="566"/>
    </location>
</feature>
<feature type="modified residue" description="Phosphoserine" evidence="2">
    <location>
        <position position="568"/>
    </location>
</feature>
<feature type="lipid moiety-binding region" description="S-palmitoyl cysteine" evidence="1">
    <location>
        <position position="561"/>
    </location>
</feature>
<feature type="lipid moiety-binding region" description="S-palmitoyl cysteine" evidence="1">
    <location>
        <position position="562"/>
    </location>
</feature>
<feature type="lipid moiety-binding region" description="S-palmitoyl cysteine" evidence="1">
    <location>
        <position position="565"/>
    </location>
</feature>